<accession>B5EXE1</accession>
<feature type="chain" id="PRO_0000356648" description="Large ribosomal subunit protein bL33">
    <location>
        <begin position="1"/>
        <end position="55"/>
    </location>
</feature>
<name>RL33_SALA4</name>
<reference key="1">
    <citation type="journal article" date="2011" name="J. Bacteriol.">
        <title>Comparative genomics of 28 Salmonella enterica isolates: evidence for CRISPR-mediated adaptive sublineage evolution.</title>
        <authorList>
            <person name="Fricke W.F."/>
            <person name="Mammel M.K."/>
            <person name="McDermott P.F."/>
            <person name="Tartera C."/>
            <person name="White D.G."/>
            <person name="Leclerc J.E."/>
            <person name="Ravel J."/>
            <person name="Cebula T.A."/>
        </authorList>
    </citation>
    <scope>NUCLEOTIDE SEQUENCE [LARGE SCALE GENOMIC DNA]</scope>
    <source>
        <strain>SL483</strain>
    </source>
</reference>
<sequence length="55" mass="6372">MAKGIREKIKLVSSAGTGHFYTTTKNKRTKPEKLELKKFDPVVRQHVIYKEAKIK</sequence>
<keyword id="KW-0687">Ribonucleoprotein</keyword>
<keyword id="KW-0689">Ribosomal protein</keyword>
<proteinExistence type="inferred from homology"/>
<protein>
    <recommendedName>
        <fullName evidence="1">Large ribosomal subunit protein bL33</fullName>
    </recommendedName>
    <alternativeName>
        <fullName evidence="2">50S ribosomal protein L33</fullName>
    </alternativeName>
</protein>
<organism>
    <name type="scientific">Salmonella agona (strain SL483)</name>
    <dbReference type="NCBI Taxonomy" id="454166"/>
    <lineage>
        <taxon>Bacteria</taxon>
        <taxon>Pseudomonadati</taxon>
        <taxon>Pseudomonadota</taxon>
        <taxon>Gammaproteobacteria</taxon>
        <taxon>Enterobacterales</taxon>
        <taxon>Enterobacteriaceae</taxon>
        <taxon>Salmonella</taxon>
    </lineage>
</organism>
<gene>
    <name evidence="1" type="primary">rpmG</name>
    <name type="ordered locus">SeAg_B3944</name>
</gene>
<dbReference type="EMBL" id="CP001138">
    <property type="protein sequence ID" value="ACH51835.1"/>
    <property type="molecule type" value="Genomic_DNA"/>
</dbReference>
<dbReference type="RefSeq" id="WP_001051798.1">
    <property type="nucleotide sequence ID" value="NC_011149.1"/>
</dbReference>
<dbReference type="SMR" id="B5EXE1"/>
<dbReference type="GeneID" id="97607673"/>
<dbReference type="KEGG" id="sea:SeAg_B3944"/>
<dbReference type="HOGENOM" id="CLU_190949_1_1_6"/>
<dbReference type="Proteomes" id="UP000008819">
    <property type="component" value="Chromosome"/>
</dbReference>
<dbReference type="GO" id="GO:0022625">
    <property type="term" value="C:cytosolic large ribosomal subunit"/>
    <property type="evidence" value="ECO:0007669"/>
    <property type="project" value="TreeGrafter"/>
</dbReference>
<dbReference type="GO" id="GO:0003735">
    <property type="term" value="F:structural constituent of ribosome"/>
    <property type="evidence" value="ECO:0007669"/>
    <property type="project" value="InterPro"/>
</dbReference>
<dbReference type="GO" id="GO:0006412">
    <property type="term" value="P:translation"/>
    <property type="evidence" value="ECO:0007669"/>
    <property type="project" value="UniProtKB-UniRule"/>
</dbReference>
<dbReference type="FunFam" id="2.20.28.120:FF:000001">
    <property type="entry name" value="50S ribosomal protein L33"/>
    <property type="match status" value="1"/>
</dbReference>
<dbReference type="Gene3D" id="2.20.28.120">
    <property type="entry name" value="Ribosomal protein L33"/>
    <property type="match status" value="1"/>
</dbReference>
<dbReference type="HAMAP" id="MF_00294">
    <property type="entry name" value="Ribosomal_bL33"/>
    <property type="match status" value="1"/>
</dbReference>
<dbReference type="InterPro" id="IPR001705">
    <property type="entry name" value="Ribosomal_bL33"/>
</dbReference>
<dbReference type="InterPro" id="IPR018264">
    <property type="entry name" value="Ribosomal_bL33_CS"/>
</dbReference>
<dbReference type="InterPro" id="IPR038584">
    <property type="entry name" value="Ribosomal_bL33_sf"/>
</dbReference>
<dbReference type="InterPro" id="IPR011332">
    <property type="entry name" value="Ribosomal_zn-bd"/>
</dbReference>
<dbReference type="NCBIfam" id="NF001860">
    <property type="entry name" value="PRK00595.1"/>
    <property type="match status" value="1"/>
</dbReference>
<dbReference type="NCBIfam" id="TIGR01023">
    <property type="entry name" value="rpmG_bact"/>
    <property type="match status" value="1"/>
</dbReference>
<dbReference type="PANTHER" id="PTHR15238">
    <property type="entry name" value="54S RIBOSOMAL PROTEIN L39, MITOCHONDRIAL"/>
    <property type="match status" value="1"/>
</dbReference>
<dbReference type="PANTHER" id="PTHR15238:SF1">
    <property type="entry name" value="LARGE RIBOSOMAL SUBUNIT PROTEIN BL33M"/>
    <property type="match status" value="1"/>
</dbReference>
<dbReference type="Pfam" id="PF00471">
    <property type="entry name" value="Ribosomal_L33"/>
    <property type="match status" value="1"/>
</dbReference>
<dbReference type="SUPFAM" id="SSF57829">
    <property type="entry name" value="Zn-binding ribosomal proteins"/>
    <property type="match status" value="1"/>
</dbReference>
<dbReference type="PROSITE" id="PS00582">
    <property type="entry name" value="RIBOSOMAL_L33"/>
    <property type="match status" value="1"/>
</dbReference>
<comment type="similarity">
    <text evidence="1">Belongs to the bacterial ribosomal protein bL33 family.</text>
</comment>
<evidence type="ECO:0000255" key="1">
    <source>
        <dbReference type="HAMAP-Rule" id="MF_00294"/>
    </source>
</evidence>
<evidence type="ECO:0000305" key="2"/>